<gene>
    <name evidence="1" type="primary">rplI</name>
    <name type="ordered locus">RALTA_A1820</name>
</gene>
<feature type="chain" id="PRO_1000126896" description="Large ribosomal subunit protein bL9">
    <location>
        <begin position="1"/>
        <end position="150"/>
    </location>
</feature>
<protein>
    <recommendedName>
        <fullName evidence="1">Large ribosomal subunit protein bL9</fullName>
    </recommendedName>
    <alternativeName>
        <fullName evidence="2">50S ribosomal protein L9</fullName>
    </alternativeName>
</protein>
<keyword id="KW-0687">Ribonucleoprotein</keyword>
<keyword id="KW-0689">Ribosomal protein</keyword>
<keyword id="KW-0694">RNA-binding</keyword>
<keyword id="KW-0699">rRNA-binding</keyword>
<proteinExistence type="inferred from homology"/>
<dbReference type="EMBL" id="CU633749">
    <property type="protein sequence ID" value="CAQ69762.1"/>
    <property type="molecule type" value="Genomic_DNA"/>
</dbReference>
<dbReference type="RefSeq" id="WP_012353081.1">
    <property type="nucleotide sequence ID" value="NC_010528.1"/>
</dbReference>
<dbReference type="SMR" id="B3R2P4"/>
<dbReference type="GeneID" id="29761385"/>
<dbReference type="KEGG" id="cti:RALTA_A1820"/>
<dbReference type="eggNOG" id="COG0359">
    <property type="taxonomic scope" value="Bacteria"/>
</dbReference>
<dbReference type="HOGENOM" id="CLU_078938_4_1_4"/>
<dbReference type="BioCyc" id="CTAI977880:RALTA_RS08775-MONOMER"/>
<dbReference type="Proteomes" id="UP000001692">
    <property type="component" value="Chromosome 1"/>
</dbReference>
<dbReference type="GO" id="GO:1990904">
    <property type="term" value="C:ribonucleoprotein complex"/>
    <property type="evidence" value="ECO:0007669"/>
    <property type="project" value="UniProtKB-KW"/>
</dbReference>
<dbReference type="GO" id="GO:0005840">
    <property type="term" value="C:ribosome"/>
    <property type="evidence" value="ECO:0007669"/>
    <property type="project" value="UniProtKB-KW"/>
</dbReference>
<dbReference type="GO" id="GO:0019843">
    <property type="term" value="F:rRNA binding"/>
    <property type="evidence" value="ECO:0007669"/>
    <property type="project" value="UniProtKB-UniRule"/>
</dbReference>
<dbReference type="GO" id="GO:0003735">
    <property type="term" value="F:structural constituent of ribosome"/>
    <property type="evidence" value="ECO:0007669"/>
    <property type="project" value="InterPro"/>
</dbReference>
<dbReference type="GO" id="GO:0006412">
    <property type="term" value="P:translation"/>
    <property type="evidence" value="ECO:0007669"/>
    <property type="project" value="UniProtKB-UniRule"/>
</dbReference>
<dbReference type="Gene3D" id="3.10.430.100">
    <property type="entry name" value="Ribosomal protein L9, C-terminal domain"/>
    <property type="match status" value="1"/>
</dbReference>
<dbReference type="Gene3D" id="3.40.5.10">
    <property type="entry name" value="Ribosomal protein L9, N-terminal domain"/>
    <property type="match status" value="1"/>
</dbReference>
<dbReference type="HAMAP" id="MF_00503">
    <property type="entry name" value="Ribosomal_bL9"/>
    <property type="match status" value="1"/>
</dbReference>
<dbReference type="InterPro" id="IPR000244">
    <property type="entry name" value="Ribosomal_bL9"/>
</dbReference>
<dbReference type="InterPro" id="IPR009027">
    <property type="entry name" value="Ribosomal_bL9/RNase_H1_N"/>
</dbReference>
<dbReference type="InterPro" id="IPR020594">
    <property type="entry name" value="Ribosomal_bL9_bac/chp"/>
</dbReference>
<dbReference type="InterPro" id="IPR020069">
    <property type="entry name" value="Ribosomal_bL9_C"/>
</dbReference>
<dbReference type="InterPro" id="IPR036791">
    <property type="entry name" value="Ribosomal_bL9_C_sf"/>
</dbReference>
<dbReference type="InterPro" id="IPR020070">
    <property type="entry name" value="Ribosomal_bL9_N"/>
</dbReference>
<dbReference type="InterPro" id="IPR036935">
    <property type="entry name" value="Ribosomal_bL9_N_sf"/>
</dbReference>
<dbReference type="NCBIfam" id="TIGR00158">
    <property type="entry name" value="L9"/>
    <property type="match status" value="1"/>
</dbReference>
<dbReference type="PANTHER" id="PTHR21368">
    <property type="entry name" value="50S RIBOSOMAL PROTEIN L9"/>
    <property type="match status" value="1"/>
</dbReference>
<dbReference type="Pfam" id="PF03948">
    <property type="entry name" value="Ribosomal_L9_C"/>
    <property type="match status" value="1"/>
</dbReference>
<dbReference type="Pfam" id="PF01281">
    <property type="entry name" value="Ribosomal_L9_N"/>
    <property type="match status" value="1"/>
</dbReference>
<dbReference type="SUPFAM" id="SSF55658">
    <property type="entry name" value="L9 N-domain-like"/>
    <property type="match status" value="1"/>
</dbReference>
<dbReference type="SUPFAM" id="SSF55653">
    <property type="entry name" value="Ribosomal protein L9 C-domain"/>
    <property type="match status" value="1"/>
</dbReference>
<dbReference type="PROSITE" id="PS00651">
    <property type="entry name" value="RIBOSOMAL_L9"/>
    <property type="match status" value="1"/>
</dbReference>
<accession>B3R2P4</accession>
<sequence length="150" mass="15945">MQVILLEKVINLGNLGDIVKVKDGYARNFLIPSKKARRATQTAIAEFEVKRAELEKAAAEKLAAAQAEGEKLNGLNVQITQKSGVDGRLFGSVTNADIAEALAGQGYKLEKSQVRLPNGPLKMVGDHPVSVALHTDVVVDVTVSVVGESV</sequence>
<name>RL9_CUPTR</name>
<organism>
    <name type="scientific">Cupriavidus taiwanensis (strain DSM 17343 / BCRC 17206 / CCUG 44338 / CIP 107171 / LMG 19424 / R1)</name>
    <name type="common">Ralstonia taiwanensis (strain LMG 19424)</name>
    <dbReference type="NCBI Taxonomy" id="977880"/>
    <lineage>
        <taxon>Bacteria</taxon>
        <taxon>Pseudomonadati</taxon>
        <taxon>Pseudomonadota</taxon>
        <taxon>Betaproteobacteria</taxon>
        <taxon>Burkholderiales</taxon>
        <taxon>Burkholderiaceae</taxon>
        <taxon>Cupriavidus</taxon>
    </lineage>
</organism>
<reference key="1">
    <citation type="journal article" date="2008" name="Genome Res.">
        <title>Genome sequence of the beta-rhizobium Cupriavidus taiwanensis and comparative genomics of rhizobia.</title>
        <authorList>
            <person name="Amadou C."/>
            <person name="Pascal G."/>
            <person name="Mangenot S."/>
            <person name="Glew M."/>
            <person name="Bontemps C."/>
            <person name="Capela D."/>
            <person name="Carrere S."/>
            <person name="Cruveiller S."/>
            <person name="Dossat C."/>
            <person name="Lajus A."/>
            <person name="Marchetti M."/>
            <person name="Poinsot V."/>
            <person name="Rouy Z."/>
            <person name="Servin B."/>
            <person name="Saad M."/>
            <person name="Schenowitz C."/>
            <person name="Barbe V."/>
            <person name="Batut J."/>
            <person name="Medigue C."/>
            <person name="Masson-Boivin C."/>
        </authorList>
    </citation>
    <scope>NUCLEOTIDE SEQUENCE [LARGE SCALE GENOMIC DNA]</scope>
    <source>
        <strain>DSM 17343 / BCRC 17206 / CCUG 44338 / CIP 107171 / LMG 19424 / R1</strain>
    </source>
</reference>
<evidence type="ECO:0000255" key="1">
    <source>
        <dbReference type="HAMAP-Rule" id="MF_00503"/>
    </source>
</evidence>
<evidence type="ECO:0000305" key="2"/>
<comment type="function">
    <text evidence="1">Binds to the 23S rRNA.</text>
</comment>
<comment type="similarity">
    <text evidence="1">Belongs to the bacterial ribosomal protein bL9 family.</text>
</comment>